<reference key="1">
    <citation type="submission" date="2006-05" db="EMBL/GenBank/DDBJ databases">
        <authorList>
            <consortium name="Genoscope"/>
        </authorList>
    </citation>
    <scope>NUCLEOTIDE SEQUENCE [LARGE SCALE GENOMIC DNA]</scope>
    <source>
        <strain>RCC307</strain>
    </source>
</reference>
<protein>
    <recommendedName>
        <fullName evidence="1">ATP phosphoribosyltransferase regulatory subunit</fullName>
    </recommendedName>
</protein>
<comment type="function">
    <text evidence="1">Required for the first step of histidine biosynthesis. May allow the feedback regulation of ATP phosphoribosyltransferase activity by histidine.</text>
</comment>
<comment type="pathway">
    <text evidence="1">Amino-acid biosynthesis; L-histidine biosynthesis; L-histidine from 5-phospho-alpha-D-ribose 1-diphosphate: step 1/9.</text>
</comment>
<comment type="subunit">
    <text evidence="1">Heteromultimer composed of HisG and HisZ subunits.</text>
</comment>
<comment type="subcellular location">
    <subcellularLocation>
        <location evidence="1">Cytoplasm</location>
    </subcellularLocation>
</comment>
<comment type="miscellaneous">
    <text>This function is generally fulfilled by the C-terminal part of HisG, which is missing in some bacteria such as this one.</text>
</comment>
<comment type="similarity">
    <text evidence="1">Belongs to the class-II aminoacyl-tRNA synthetase family. HisZ subfamily.</text>
</comment>
<gene>
    <name evidence="1" type="primary">hisZ</name>
    <name type="ordered locus">SynRCC307_1369</name>
</gene>
<evidence type="ECO:0000255" key="1">
    <source>
        <dbReference type="HAMAP-Rule" id="MF_00125"/>
    </source>
</evidence>
<accession>A5GTR3</accession>
<sequence>MALQPASGARDLLPRDVGVNRWIAEQLAAVYQRWGYEEVTPPSLERIDTLEAGGAIQSHQVVQVVADEALGLRPEMTASIARAACTRLAAMQRPLRLHYRGSTFQAQRAEDQGLRIVEDLQSGVELMGAKGLAGDAELLRLLLDAGSHLPLSAEHQPTLLIGHQRLLSVLLEAVEPSLRSTVRRHVCGLNRVALSQLELPGQQRLQLLQLLQLRGEPAAVLNGLEALLGATDLLAELKQLISIIEEQASRAGIRLQLDPTFHPDFELYDGVMVKLVCQGLDAPVAIASGGRYDALVQRFSPVGAVASGVGFSFAVEAVRQLLEQADQLPPRLDGQLVLVAYSQSSQLHPALNLLEQLHQSGQPAELWPEPCANQDEAQGIATQRGVQTVRWVG</sequence>
<organism>
    <name type="scientific">Synechococcus sp. (strain RCC307)</name>
    <dbReference type="NCBI Taxonomy" id="316278"/>
    <lineage>
        <taxon>Bacteria</taxon>
        <taxon>Bacillati</taxon>
        <taxon>Cyanobacteriota</taxon>
        <taxon>Cyanophyceae</taxon>
        <taxon>Synechococcales</taxon>
        <taxon>Synechococcaceae</taxon>
        <taxon>Synechococcus</taxon>
    </lineage>
</organism>
<name>HISZ_SYNR3</name>
<dbReference type="EMBL" id="CT978603">
    <property type="protein sequence ID" value="CAK28272.1"/>
    <property type="molecule type" value="Genomic_DNA"/>
</dbReference>
<dbReference type="SMR" id="A5GTR3"/>
<dbReference type="STRING" id="316278.SynRCC307_1369"/>
<dbReference type="KEGG" id="syr:SynRCC307_1369"/>
<dbReference type="eggNOG" id="COG3705">
    <property type="taxonomic scope" value="Bacteria"/>
</dbReference>
<dbReference type="HOGENOM" id="CLU_025113_0_2_3"/>
<dbReference type="OrthoDB" id="9800814at2"/>
<dbReference type="UniPathway" id="UPA00031">
    <property type="reaction ID" value="UER00006"/>
</dbReference>
<dbReference type="Proteomes" id="UP000001115">
    <property type="component" value="Chromosome"/>
</dbReference>
<dbReference type="GO" id="GO:0005737">
    <property type="term" value="C:cytoplasm"/>
    <property type="evidence" value="ECO:0007669"/>
    <property type="project" value="UniProtKB-SubCell"/>
</dbReference>
<dbReference type="GO" id="GO:0004821">
    <property type="term" value="F:histidine-tRNA ligase activity"/>
    <property type="evidence" value="ECO:0007669"/>
    <property type="project" value="TreeGrafter"/>
</dbReference>
<dbReference type="GO" id="GO:0006427">
    <property type="term" value="P:histidyl-tRNA aminoacylation"/>
    <property type="evidence" value="ECO:0007669"/>
    <property type="project" value="TreeGrafter"/>
</dbReference>
<dbReference type="GO" id="GO:0000105">
    <property type="term" value="P:L-histidine biosynthetic process"/>
    <property type="evidence" value="ECO:0007669"/>
    <property type="project" value="UniProtKB-UniRule"/>
</dbReference>
<dbReference type="Gene3D" id="3.30.930.10">
    <property type="entry name" value="Bira Bifunctional Protein, Domain 2"/>
    <property type="match status" value="1"/>
</dbReference>
<dbReference type="HAMAP" id="MF_00125">
    <property type="entry name" value="HisZ"/>
    <property type="match status" value="1"/>
</dbReference>
<dbReference type="InterPro" id="IPR006195">
    <property type="entry name" value="aa-tRNA-synth_II"/>
</dbReference>
<dbReference type="InterPro" id="IPR045864">
    <property type="entry name" value="aa-tRNA-synth_II/BPL/LPL"/>
</dbReference>
<dbReference type="InterPro" id="IPR041715">
    <property type="entry name" value="HisRS-like_core"/>
</dbReference>
<dbReference type="InterPro" id="IPR004516">
    <property type="entry name" value="HisRS/HisZ"/>
</dbReference>
<dbReference type="InterPro" id="IPR004517">
    <property type="entry name" value="HisZ"/>
</dbReference>
<dbReference type="NCBIfam" id="NF008939">
    <property type="entry name" value="PRK12292.2-1"/>
    <property type="match status" value="1"/>
</dbReference>
<dbReference type="PANTHER" id="PTHR43707:SF1">
    <property type="entry name" value="HISTIDINE--TRNA LIGASE, MITOCHONDRIAL-RELATED"/>
    <property type="match status" value="1"/>
</dbReference>
<dbReference type="PANTHER" id="PTHR43707">
    <property type="entry name" value="HISTIDYL-TRNA SYNTHETASE"/>
    <property type="match status" value="1"/>
</dbReference>
<dbReference type="Pfam" id="PF13393">
    <property type="entry name" value="tRNA-synt_His"/>
    <property type="match status" value="1"/>
</dbReference>
<dbReference type="PIRSF" id="PIRSF001549">
    <property type="entry name" value="His-tRNA_synth"/>
    <property type="match status" value="1"/>
</dbReference>
<dbReference type="SUPFAM" id="SSF55681">
    <property type="entry name" value="Class II aaRS and biotin synthetases"/>
    <property type="match status" value="1"/>
</dbReference>
<dbReference type="PROSITE" id="PS50862">
    <property type="entry name" value="AA_TRNA_LIGASE_II"/>
    <property type="match status" value="1"/>
</dbReference>
<proteinExistence type="inferred from homology"/>
<feature type="chain" id="PRO_1000016290" description="ATP phosphoribosyltransferase regulatory subunit">
    <location>
        <begin position="1"/>
        <end position="393"/>
    </location>
</feature>
<keyword id="KW-0028">Amino-acid biosynthesis</keyword>
<keyword id="KW-0963">Cytoplasm</keyword>
<keyword id="KW-0368">Histidine biosynthesis</keyword>
<keyword id="KW-1185">Reference proteome</keyword>